<proteinExistence type="inferred from homology"/>
<feature type="chain" id="PRO_1000123354" description="Large ribosomal subunit protein bL19">
    <location>
        <begin position="1"/>
        <end position="121"/>
    </location>
</feature>
<gene>
    <name evidence="1" type="primary">rplS</name>
    <name type="ordered locus">PGN_0035</name>
</gene>
<sequence length="121" mass="14088">MDFIKIVNEEFKSGKEHPKFNSGDTITVEYRIKEGNKERIQKYRGVVIRISGHGDKKRFTVRKISDGIGVERIFPIESPFIENITVEKYGKVRRAKLYYLRGLTGKKARIKERRVALSSKD</sequence>
<protein>
    <recommendedName>
        <fullName evidence="1">Large ribosomal subunit protein bL19</fullName>
    </recommendedName>
    <alternativeName>
        <fullName evidence="2">50S ribosomal protein L19</fullName>
    </alternativeName>
</protein>
<accession>B2RGQ9</accession>
<organism>
    <name type="scientific">Porphyromonas gingivalis (strain ATCC 33277 / DSM 20709 / CIP 103683 / JCM 12257 / NCTC 11834 / 2561)</name>
    <dbReference type="NCBI Taxonomy" id="431947"/>
    <lineage>
        <taxon>Bacteria</taxon>
        <taxon>Pseudomonadati</taxon>
        <taxon>Bacteroidota</taxon>
        <taxon>Bacteroidia</taxon>
        <taxon>Bacteroidales</taxon>
        <taxon>Porphyromonadaceae</taxon>
        <taxon>Porphyromonas</taxon>
    </lineage>
</organism>
<reference key="1">
    <citation type="journal article" date="2008" name="DNA Res.">
        <title>Determination of the genome sequence of Porphyromonas gingivalis strain ATCC 33277 and genomic comparison with strain W83 revealed extensive genome rearrangements in P. gingivalis.</title>
        <authorList>
            <person name="Naito M."/>
            <person name="Hirakawa H."/>
            <person name="Yamashita A."/>
            <person name="Ohara N."/>
            <person name="Shoji M."/>
            <person name="Yukitake H."/>
            <person name="Nakayama K."/>
            <person name="Toh H."/>
            <person name="Yoshimura F."/>
            <person name="Kuhara S."/>
            <person name="Hattori M."/>
            <person name="Hayashi T."/>
            <person name="Nakayama K."/>
        </authorList>
    </citation>
    <scope>NUCLEOTIDE SEQUENCE [LARGE SCALE GENOMIC DNA]</scope>
    <source>
        <strain>ATCC 33277 / DSM 20709 / CIP 103683 / JCM 12257 / NCTC 11834 / 2561</strain>
    </source>
</reference>
<name>RL19_PORG3</name>
<keyword id="KW-0687">Ribonucleoprotein</keyword>
<keyword id="KW-0689">Ribosomal protein</keyword>
<comment type="function">
    <text evidence="1">This protein is located at the 30S-50S ribosomal subunit interface and may play a role in the structure and function of the aminoacyl-tRNA binding site.</text>
</comment>
<comment type="similarity">
    <text evidence="1">Belongs to the bacterial ribosomal protein bL19 family.</text>
</comment>
<dbReference type="EMBL" id="AP009380">
    <property type="protein sequence ID" value="BAG32554.1"/>
    <property type="molecule type" value="Genomic_DNA"/>
</dbReference>
<dbReference type="RefSeq" id="WP_004583436.1">
    <property type="nucleotide sequence ID" value="NZ_CP025930.1"/>
</dbReference>
<dbReference type="SMR" id="B2RGQ9"/>
<dbReference type="GeneID" id="29255294"/>
<dbReference type="KEGG" id="pgn:PGN_0035"/>
<dbReference type="eggNOG" id="COG0335">
    <property type="taxonomic scope" value="Bacteria"/>
</dbReference>
<dbReference type="HOGENOM" id="CLU_103507_2_2_10"/>
<dbReference type="OrthoDB" id="9803541at2"/>
<dbReference type="BioCyc" id="PGIN431947:G1G2V-38-MONOMER"/>
<dbReference type="Proteomes" id="UP000008842">
    <property type="component" value="Chromosome"/>
</dbReference>
<dbReference type="GO" id="GO:0022625">
    <property type="term" value="C:cytosolic large ribosomal subunit"/>
    <property type="evidence" value="ECO:0007669"/>
    <property type="project" value="TreeGrafter"/>
</dbReference>
<dbReference type="GO" id="GO:0003735">
    <property type="term" value="F:structural constituent of ribosome"/>
    <property type="evidence" value="ECO:0007669"/>
    <property type="project" value="InterPro"/>
</dbReference>
<dbReference type="GO" id="GO:0006412">
    <property type="term" value="P:translation"/>
    <property type="evidence" value="ECO:0007669"/>
    <property type="project" value="UniProtKB-UniRule"/>
</dbReference>
<dbReference type="FunFam" id="2.30.30.790:FF:000001">
    <property type="entry name" value="50S ribosomal protein L19"/>
    <property type="match status" value="1"/>
</dbReference>
<dbReference type="Gene3D" id="2.30.30.790">
    <property type="match status" value="1"/>
</dbReference>
<dbReference type="HAMAP" id="MF_00402">
    <property type="entry name" value="Ribosomal_bL19"/>
    <property type="match status" value="1"/>
</dbReference>
<dbReference type="InterPro" id="IPR001857">
    <property type="entry name" value="Ribosomal_bL19"/>
</dbReference>
<dbReference type="InterPro" id="IPR018257">
    <property type="entry name" value="Ribosomal_bL19_CS"/>
</dbReference>
<dbReference type="InterPro" id="IPR038657">
    <property type="entry name" value="Ribosomal_bL19_sf"/>
</dbReference>
<dbReference type="InterPro" id="IPR008991">
    <property type="entry name" value="Translation_prot_SH3-like_sf"/>
</dbReference>
<dbReference type="NCBIfam" id="TIGR01024">
    <property type="entry name" value="rplS_bact"/>
    <property type="match status" value="1"/>
</dbReference>
<dbReference type="PANTHER" id="PTHR15680:SF9">
    <property type="entry name" value="LARGE RIBOSOMAL SUBUNIT PROTEIN BL19M"/>
    <property type="match status" value="1"/>
</dbReference>
<dbReference type="PANTHER" id="PTHR15680">
    <property type="entry name" value="RIBOSOMAL PROTEIN L19"/>
    <property type="match status" value="1"/>
</dbReference>
<dbReference type="Pfam" id="PF01245">
    <property type="entry name" value="Ribosomal_L19"/>
    <property type="match status" value="1"/>
</dbReference>
<dbReference type="PIRSF" id="PIRSF002191">
    <property type="entry name" value="Ribosomal_L19"/>
    <property type="match status" value="1"/>
</dbReference>
<dbReference type="PRINTS" id="PR00061">
    <property type="entry name" value="RIBOSOMALL19"/>
</dbReference>
<dbReference type="SUPFAM" id="SSF50104">
    <property type="entry name" value="Translation proteins SH3-like domain"/>
    <property type="match status" value="1"/>
</dbReference>
<dbReference type="PROSITE" id="PS01015">
    <property type="entry name" value="RIBOSOMAL_L19"/>
    <property type="match status" value="1"/>
</dbReference>
<evidence type="ECO:0000255" key="1">
    <source>
        <dbReference type="HAMAP-Rule" id="MF_00402"/>
    </source>
</evidence>
<evidence type="ECO:0000305" key="2"/>